<keyword id="KW-0963">Cytoplasm</keyword>
<keyword id="KW-0488">Methylation</keyword>
<keyword id="KW-0648">Protein biosynthesis</keyword>
<reference key="1">
    <citation type="journal article" date="2005" name="J. Bacteriol.">
        <title>Insights on evolution of virulence and resistance from the complete genome analysis of an early methicillin-resistant Staphylococcus aureus strain and a biofilm-producing methicillin-resistant Staphylococcus epidermidis strain.</title>
        <authorList>
            <person name="Gill S.R."/>
            <person name="Fouts D.E."/>
            <person name="Archer G.L."/>
            <person name="Mongodin E.F."/>
            <person name="DeBoy R.T."/>
            <person name="Ravel J."/>
            <person name="Paulsen I.T."/>
            <person name="Kolonay J.F."/>
            <person name="Brinkac L.M."/>
            <person name="Beanan M.J."/>
            <person name="Dodson R.J."/>
            <person name="Daugherty S.C."/>
            <person name="Madupu R."/>
            <person name="Angiuoli S.V."/>
            <person name="Durkin A.S."/>
            <person name="Haft D.H."/>
            <person name="Vamathevan J.J."/>
            <person name="Khouri H."/>
            <person name="Utterback T.R."/>
            <person name="Lee C."/>
            <person name="Dimitrov G."/>
            <person name="Jiang L."/>
            <person name="Qin H."/>
            <person name="Weidman J."/>
            <person name="Tran K."/>
            <person name="Kang K.H."/>
            <person name="Hance I.R."/>
            <person name="Nelson K.E."/>
            <person name="Fraser C.M."/>
        </authorList>
    </citation>
    <scope>NUCLEOTIDE SEQUENCE [LARGE SCALE GENOMIC DNA]</scope>
    <source>
        <strain>COL</strain>
    </source>
</reference>
<organism>
    <name type="scientific">Staphylococcus aureus (strain COL)</name>
    <dbReference type="NCBI Taxonomy" id="93062"/>
    <lineage>
        <taxon>Bacteria</taxon>
        <taxon>Bacillati</taxon>
        <taxon>Bacillota</taxon>
        <taxon>Bacilli</taxon>
        <taxon>Bacillales</taxon>
        <taxon>Staphylococcaceae</taxon>
        <taxon>Staphylococcus</taxon>
    </lineage>
</organism>
<name>RF1_STAAC</name>
<comment type="function">
    <text evidence="1">Peptide chain release factor 1 directs the termination of translation in response to the peptide chain termination codons UAG and UAA.</text>
</comment>
<comment type="subcellular location">
    <subcellularLocation>
        <location evidence="1">Cytoplasm</location>
    </subcellularLocation>
</comment>
<comment type="PTM">
    <text evidence="1">Methylated by PrmC. Methylation increases the termination efficiency of RF1.</text>
</comment>
<comment type="similarity">
    <text evidence="1">Belongs to the prokaryotic/mitochondrial release factor family.</text>
</comment>
<protein>
    <recommendedName>
        <fullName evidence="1">Peptide chain release factor 1</fullName>
        <shortName evidence="1">RF-1</shortName>
    </recommendedName>
</protein>
<gene>
    <name evidence="1" type="primary">prfA</name>
    <name type="ordered locus">SACOL2110</name>
</gene>
<feature type="chain" id="PRO_0000177737" description="Peptide chain release factor 1">
    <location>
        <begin position="1"/>
        <end position="358"/>
    </location>
</feature>
<feature type="modified residue" description="N5-methylglutamine" evidence="1">
    <location>
        <position position="233"/>
    </location>
</feature>
<accession>Q5HE82</accession>
<sequence length="358" mass="40350">MFDQLDIVEERYEQLNELLSDPDVVNDSDKLRKYSKEQADLQKTVDVYRNYKAKKEELADIEEMLSETDDKEEVEMLKEESNGIKAELPNLEEELKILLIPKDPNDDKDVIVEIRAAAGGDEAAIFAGDLMRMYSKYAESQGFKTEIVEASESDHGGYKEISFSVSGNGAYSKLKFENGAHRVQRVPETESGGRIHTSTATVAVLPEVEDVEIEIRNEDLKIDTYRSSGAGGQHVNTTDSAVRITHLPTGVIATSSEKSQIQNREKAMKVLKARLYDMKVQEEQQKYASQRKSAVGTGDRSERIRTYNYPQSRVTDHRIGLTLQKLGQIMEGHLEEIIDALTLSEQTDKLKELNNGEL</sequence>
<proteinExistence type="inferred from homology"/>
<evidence type="ECO:0000255" key="1">
    <source>
        <dbReference type="HAMAP-Rule" id="MF_00093"/>
    </source>
</evidence>
<dbReference type="EMBL" id="CP000046">
    <property type="protein sequence ID" value="AAW38420.1"/>
    <property type="molecule type" value="Genomic_DNA"/>
</dbReference>
<dbReference type="RefSeq" id="WP_000460242.1">
    <property type="nucleotide sequence ID" value="NZ_JBGOFO010000007.1"/>
</dbReference>
<dbReference type="SMR" id="Q5HE82"/>
<dbReference type="KEGG" id="sac:SACOL2110"/>
<dbReference type="HOGENOM" id="CLU_036856_0_1_9"/>
<dbReference type="Proteomes" id="UP000000530">
    <property type="component" value="Chromosome"/>
</dbReference>
<dbReference type="GO" id="GO:0005737">
    <property type="term" value="C:cytoplasm"/>
    <property type="evidence" value="ECO:0007669"/>
    <property type="project" value="UniProtKB-SubCell"/>
</dbReference>
<dbReference type="GO" id="GO:0016149">
    <property type="term" value="F:translation release factor activity, codon specific"/>
    <property type="evidence" value="ECO:0007669"/>
    <property type="project" value="UniProtKB-UniRule"/>
</dbReference>
<dbReference type="FunFam" id="3.30.160.20:FF:000004">
    <property type="entry name" value="Peptide chain release factor 1"/>
    <property type="match status" value="1"/>
</dbReference>
<dbReference type="FunFam" id="3.30.70.1660:FF:000002">
    <property type="entry name" value="Peptide chain release factor 1"/>
    <property type="match status" value="1"/>
</dbReference>
<dbReference type="FunFam" id="3.30.70.1660:FF:000004">
    <property type="entry name" value="Peptide chain release factor 1"/>
    <property type="match status" value="1"/>
</dbReference>
<dbReference type="Gene3D" id="3.30.160.20">
    <property type="match status" value="1"/>
</dbReference>
<dbReference type="Gene3D" id="3.30.70.1660">
    <property type="match status" value="1"/>
</dbReference>
<dbReference type="Gene3D" id="6.10.140.1950">
    <property type="match status" value="1"/>
</dbReference>
<dbReference type="HAMAP" id="MF_00093">
    <property type="entry name" value="Rel_fac_1"/>
    <property type="match status" value="1"/>
</dbReference>
<dbReference type="InterPro" id="IPR005139">
    <property type="entry name" value="PCRF"/>
</dbReference>
<dbReference type="InterPro" id="IPR000352">
    <property type="entry name" value="Pep_chain_release_fac_I"/>
</dbReference>
<dbReference type="InterPro" id="IPR045853">
    <property type="entry name" value="Pep_chain_release_fac_I_sf"/>
</dbReference>
<dbReference type="InterPro" id="IPR050057">
    <property type="entry name" value="Prokaryotic/Mito_RF"/>
</dbReference>
<dbReference type="InterPro" id="IPR004373">
    <property type="entry name" value="RF-1"/>
</dbReference>
<dbReference type="NCBIfam" id="TIGR00019">
    <property type="entry name" value="prfA"/>
    <property type="match status" value="1"/>
</dbReference>
<dbReference type="NCBIfam" id="NF001859">
    <property type="entry name" value="PRK00591.1"/>
    <property type="match status" value="1"/>
</dbReference>
<dbReference type="PANTHER" id="PTHR43804">
    <property type="entry name" value="LD18447P"/>
    <property type="match status" value="1"/>
</dbReference>
<dbReference type="PANTHER" id="PTHR43804:SF7">
    <property type="entry name" value="LD18447P"/>
    <property type="match status" value="1"/>
</dbReference>
<dbReference type="Pfam" id="PF03462">
    <property type="entry name" value="PCRF"/>
    <property type="match status" value="1"/>
</dbReference>
<dbReference type="Pfam" id="PF00472">
    <property type="entry name" value="RF-1"/>
    <property type="match status" value="1"/>
</dbReference>
<dbReference type="SMART" id="SM00937">
    <property type="entry name" value="PCRF"/>
    <property type="match status" value="1"/>
</dbReference>
<dbReference type="SUPFAM" id="SSF75620">
    <property type="entry name" value="Release factor"/>
    <property type="match status" value="1"/>
</dbReference>
<dbReference type="PROSITE" id="PS00745">
    <property type="entry name" value="RF_PROK_I"/>
    <property type="match status" value="1"/>
</dbReference>